<keyword id="KW-0012">Acyltransferase</keyword>
<keyword id="KW-0346">Stress response</keyword>
<keyword id="KW-0808">Transferase</keyword>
<dbReference type="EC" id="2.3.1.178"/>
<dbReference type="EMBL" id="AF316874">
    <property type="protein sequence ID" value="AAK12083.1"/>
    <property type="molecule type" value="Genomic_DNA"/>
</dbReference>
<dbReference type="SMR" id="Q9AP35"/>
<dbReference type="KEGG" id="ag:AAK12083"/>
<dbReference type="UniPathway" id="UPA00067">
    <property type="reaction ID" value="UER00122"/>
</dbReference>
<dbReference type="GO" id="GO:0033816">
    <property type="term" value="F:diaminobutyrate acetyltransferase activity"/>
    <property type="evidence" value="ECO:0007669"/>
    <property type="project" value="UniProtKB-EC"/>
</dbReference>
<dbReference type="GO" id="GO:0019491">
    <property type="term" value="P:ectoine biosynthetic process"/>
    <property type="evidence" value="ECO:0007669"/>
    <property type="project" value="UniProtKB-UniPathway"/>
</dbReference>
<dbReference type="Gene3D" id="3.40.630.30">
    <property type="match status" value="1"/>
</dbReference>
<dbReference type="InterPro" id="IPR016181">
    <property type="entry name" value="Acyl_CoA_acyltransferase"/>
</dbReference>
<dbReference type="InterPro" id="IPR012772">
    <property type="entry name" value="Ectoine_EctA"/>
</dbReference>
<dbReference type="InterPro" id="IPR000182">
    <property type="entry name" value="GNAT_dom"/>
</dbReference>
<dbReference type="NCBIfam" id="TIGR02406">
    <property type="entry name" value="ectoine_EctA"/>
    <property type="match status" value="1"/>
</dbReference>
<dbReference type="Pfam" id="PF00583">
    <property type="entry name" value="Acetyltransf_1"/>
    <property type="match status" value="1"/>
</dbReference>
<dbReference type="SUPFAM" id="SSF55729">
    <property type="entry name" value="Acyl-CoA N-acyltransferases (Nat)"/>
    <property type="match status" value="1"/>
</dbReference>
<dbReference type="PROSITE" id="PS51186">
    <property type="entry name" value="GNAT"/>
    <property type="match status" value="1"/>
</dbReference>
<feature type="chain" id="PRO_0000220081" description="L-2,4-diaminobutyric acid acetyltransferase">
    <location>
        <begin position="1"/>
        <end position="180"/>
    </location>
</feature>
<feature type="domain" description="N-acetyltransferase" evidence="1">
    <location>
        <begin position="20"/>
        <end position="180"/>
    </location>
</feature>
<protein>
    <recommendedName>
        <fullName>L-2,4-diaminobutyric acid acetyltransferase</fullName>
        <shortName>DABA acetyltransferase</shortName>
        <ecNumber>2.3.1.178</ecNumber>
    </recommendedName>
</protein>
<evidence type="ECO:0000255" key="1">
    <source>
        <dbReference type="PROSITE-ProRule" id="PRU00532"/>
    </source>
</evidence>
<evidence type="ECO:0000269" key="2">
    <source>
    </source>
</evidence>
<evidence type="ECO:0000305" key="3"/>
<gene>
    <name type="primary">ectA</name>
</gene>
<accession>Q9AP35</accession>
<reference key="1">
    <citation type="journal article" date="2002" name="Appl. Environ. Microbiol.">
        <title>Osmotically regulated synthesis of the compatible solute ectoine in Bacillus pasteurii and related Bacillus spp.</title>
        <authorList>
            <person name="Kuhlmann A.U."/>
            <person name="Bremer E."/>
        </authorList>
    </citation>
    <scope>NUCLEOTIDE SEQUENCE [GENOMIC DNA]</scope>
    <scope>TRANSCRIPTIONAL REGULATION</scope>
    <source>
        <strain>ATCC 11859 / DSM 33 / NCIB 8841 / NCTC 4822</strain>
    </source>
</reference>
<organism>
    <name type="scientific">Sporosarcina pasteurii</name>
    <name type="common">Bacillus pasteurii</name>
    <dbReference type="NCBI Taxonomy" id="1474"/>
    <lineage>
        <taxon>Bacteria</taxon>
        <taxon>Bacillati</taxon>
        <taxon>Bacillota</taxon>
        <taxon>Bacilli</taxon>
        <taxon>Bacillales</taxon>
        <taxon>Caryophanaceae</taxon>
        <taxon>Sporosarcina</taxon>
    </lineage>
</organism>
<comment type="function">
    <text evidence="3">Catalyzes the acetylation of L-2,4-diaminobutyrate (DABA) to gamma-N-acetyl-alpha,gamma-diaminobutyric acid (ADABA) with acetyl coenzyme A.</text>
</comment>
<comment type="catalytic activity">
    <reaction>
        <text>L-2,4-diaminobutanoate + acetyl-CoA = (2S)-4-acetamido-2-aminobutanoate + CoA + H(+)</text>
        <dbReference type="Rhea" id="RHEA:16901"/>
        <dbReference type="ChEBI" id="CHEBI:15378"/>
        <dbReference type="ChEBI" id="CHEBI:57287"/>
        <dbReference type="ChEBI" id="CHEBI:57288"/>
        <dbReference type="ChEBI" id="CHEBI:58761"/>
        <dbReference type="ChEBI" id="CHEBI:58929"/>
        <dbReference type="EC" id="2.3.1.178"/>
    </reaction>
</comment>
<comment type="pathway">
    <text>Amine and polyamine biosynthesis; ectoine biosynthesis; L-ectoine from L-aspartate 4-semialdehyde: step 2/3.</text>
</comment>
<comment type="induction">
    <text evidence="2">By osmotic stress.</text>
</comment>
<comment type="similarity">
    <text evidence="3">Belongs to the acetyltransferase family. EctA subfamily.</text>
</comment>
<proteinExistence type="evidence at transcript level"/>
<sequence>MFWVISKQGSTAVAEQEETLVFRVPTEDDGKAIWNLINYPGVLDLLSSYSYFMWAKFFDQTSVVGETNEQIVGFYIGLHTTEYGPDTLFYLASCSDETQRQKGLASRMLQAILHRYAWRNIRYLEATVGTSNEAPEALFQKLSRDLKTAYHVTEFFTEDQFPGKGHEDERLFKIGPFQQV</sequence>
<name>ECTA_SPOPA</name>